<proteinExistence type="evidence at protein level"/>
<evidence type="ECO:0000250" key="1"/>
<evidence type="ECO:0000255" key="2"/>
<evidence type="ECO:0000255" key="3">
    <source>
        <dbReference type="PROSITE-ProRule" id="PRU00289"/>
    </source>
</evidence>
<evidence type="ECO:0000256" key="4">
    <source>
        <dbReference type="SAM" id="MobiDB-lite"/>
    </source>
</evidence>
<evidence type="ECO:0000305" key="5"/>
<gene>
    <name type="primary">ftsK</name>
    <name type="ordered locus">Rv2748c</name>
    <name type="ORF">MTV002.13c</name>
</gene>
<name>FTSK_MYCTU</name>
<feature type="chain" id="PRO_0000098271" description="DNA translocase FtsK">
    <location>
        <begin position="1"/>
        <end position="831"/>
    </location>
</feature>
<feature type="transmembrane region" description="Helical" evidence="2">
    <location>
        <begin position="98"/>
        <end position="118"/>
    </location>
</feature>
<feature type="transmembrane region" description="Helical" evidence="2">
    <location>
        <begin position="132"/>
        <end position="152"/>
    </location>
</feature>
<feature type="transmembrane region" description="Helical" evidence="2">
    <location>
        <begin position="164"/>
        <end position="184"/>
    </location>
</feature>
<feature type="transmembrane region" description="Helical" evidence="2">
    <location>
        <begin position="214"/>
        <end position="234"/>
    </location>
</feature>
<feature type="topological domain" description="Cytoplasmic" evidence="2">
    <location>
        <begin position="235"/>
        <end position="831"/>
    </location>
</feature>
<feature type="domain" description="FtsK" evidence="3">
    <location>
        <begin position="476"/>
        <end position="676"/>
    </location>
</feature>
<feature type="region of interest" description="Disordered" evidence="4">
    <location>
        <begin position="1"/>
        <end position="48"/>
    </location>
</feature>
<feature type="region of interest" description="Disordered" evidence="4">
    <location>
        <begin position="296"/>
        <end position="331"/>
    </location>
</feature>
<feature type="compositionally biased region" description="Low complexity" evidence="4">
    <location>
        <begin position="7"/>
        <end position="30"/>
    </location>
</feature>
<feature type="binding site" evidence="3">
    <location>
        <begin position="496"/>
        <end position="501"/>
    </location>
    <ligand>
        <name>ATP</name>
        <dbReference type="ChEBI" id="CHEBI:30616"/>
    </ligand>
</feature>
<protein>
    <recommendedName>
        <fullName>DNA translocase FtsK</fullName>
    </recommendedName>
</protein>
<keyword id="KW-0067">ATP-binding</keyword>
<keyword id="KW-0131">Cell cycle</keyword>
<keyword id="KW-0132">Cell division</keyword>
<keyword id="KW-1003">Cell membrane</keyword>
<keyword id="KW-0159">Chromosome partition</keyword>
<keyword id="KW-0238">DNA-binding</keyword>
<keyword id="KW-0472">Membrane</keyword>
<keyword id="KW-0547">Nucleotide-binding</keyword>
<keyword id="KW-1185">Reference proteome</keyword>
<keyword id="KW-0812">Transmembrane</keyword>
<keyword id="KW-1133">Transmembrane helix</keyword>
<comment type="function">
    <text evidence="1">Essential cell division protein that coordinates cell division and chromosome segregation. The N-terminus is involved in assembly of the cell-division machinery. The C-terminus functions as a DNA motor that moves dsDNA in an ATP-dependent manner towards the dif recombination site, which is located within the replication terminus region. Required for activation of the Xer recombinase, allowing activation of chromosome unlinking by recombination (By similarity).</text>
</comment>
<comment type="subunit">
    <text evidence="1">Homohexamer. Forms a ring that surrounds DNA (By similarity).</text>
</comment>
<comment type="subcellular location">
    <subcellularLocation>
        <location evidence="1">Cell membrane</location>
        <topology evidence="1">Multi-pass membrane protein</topology>
    </subcellularLocation>
    <text evidence="1">Located at the septum.</text>
</comment>
<comment type="domain">
    <text evidence="1">Consists of an N-terminal domain, which is sufficient for the localization to the septal ring and is required for cell division, followed by a linker domain, and a C-terminal domain, which forms the translocation motor involved in chromosome segregation. The C-terminal domain can be further subdivided into alpha, beta and gamma subdomains. The alpha and beta subdomains form the DNA pump, and the gamma subdomain is a regulatory subdomain (By similarity).</text>
</comment>
<comment type="miscellaneous">
    <text>Was identified as a high-confidence drug target.</text>
</comment>
<comment type="similarity">
    <text evidence="5">Belongs to the FtsK/SpoIIIE/SftA family.</text>
</comment>
<comment type="sequence caution" evidence="5">
    <conflict type="erroneous initiation">
        <sequence resource="EMBL-CDS" id="CCP45547"/>
    </conflict>
    <text>Extended N-terminus.</text>
</comment>
<organism>
    <name type="scientific">Mycobacterium tuberculosis (strain ATCC 25618 / H37Rv)</name>
    <dbReference type="NCBI Taxonomy" id="83332"/>
    <lineage>
        <taxon>Bacteria</taxon>
        <taxon>Bacillati</taxon>
        <taxon>Actinomycetota</taxon>
        <taxon>Actinomycetes</taxon>
        <taxon>Mycobacteriales</taxon>
        <taxon>Mycobacteriaceae</taxon>
        <taxon>Mycobacterium</taxon>
        <taxon>Mycobacterium tuberculosis complex</taxon>
    </lineage>
</organism>
<sequence length="831" mass="88887">MSSKTVARSGTRTSRSKATSRGASRSARSAVPRKRSRPVKGVGRPSRRHHRSLLVSTGLACGRAMRAVWMMAAKGTGGAARSIGRARDIEPGHRRDGIALVLLGLAVVVAASSWFDAARPLGAWVDALLRTFIGSAVVMLPLVAAAVAVVLMRTSPNPDSRPRLILGASLIGLSFLGLCHLWAGSPEAPESRLRAAGFIGFAIGGPLSDGLTAWIAAPLLFIGALFGLLLLAGITIREVPDAMRAMFGTRLLPREYADDFEDFADFDGDDADTVEVARQDFSDGYYDEVPLCSDDGPPAWPSAEVPQDDTATIPEASAGRGSGRRGRRKDTQVLDRIVEGPYTLPSLDLLISGDPPKKRSAANTHMAGAIGEVLTQFKVDAAVTGCTRGPTVTRYEVELGPGVKVEKITALQRNIAYAVATESVRMLAPIPGKSAVGIEVPNTDREMVRLADVLTARETRRDHHPLVIGLGKDIEGDFISANLAKMPHLLVAGSTGSGKSSFVNSMLVSLLTRATPEEVRMILIDPKMVELTPYEGIPHLITPIITQPKKAAAALAWLVDEMEQRYQDMQASRVRHIDDFNDKVRSGAITAPLGSQREYRPYPYVVAIVDELADLMMTAPRDVEDAIVRITQKARAAGIHLVLATQRPSVDVVTGLIKTNVPSRLAFATSSLTDSRVILDQAGAEKLIGMGDGLFLPMGASKPLRLQGAYVSDEEIHAVVTACKEQAEPEYTEGVTTAKPTAERTDVDPDIGDDMDVFLQAVELVVSSQFGSTSMLQRKLRVGFAKAGRLMDLMETRGIVGPSEGSKAREVLVKPDELAGTLAAIRGDGGE</sequence>
<reference key="1">
    <citation type="journal article" date="1998" name="Nature">
        <title>Deciphering the biology of Mycobacterium tuberculosis from the complete genome sequence.</title>
        <authorList>
            <person name="Cole S.T."/>
            <person name="Brosch R."/>
            <person name="Parkhill J."/>
            <person name="Garnier T."/>
            <person name="Churcher C.M."/>
            <person name="Harris D.E."/>
            <person name="Gordon S.V."/>
            <person name="Eiglmeier K."/>
            <person name="Gas S."/>
            <person name="Barry C.E. III"/>
            <person name="Tekaia F."/>
            <person name="Badcock K."/>
            <person name="Basham D."/>
            <person name="Brown D."/>
            <person name="Chillingworth T."/>
            <person name="Connor R."/>
            <person name="Davies R.M."/>
            <person name="Devlin K."/>
            <person name="Feltwell T."/>
            <person name="Gentles S."/>
            <person name="Hamlin N."/>
            <person name="Holroyd S."/>
            <person name="Hornsby T."/>
            <person name="Jagels K."/>
            <person name="Krogh A."/>
            <person name="McLean J."/>
            <person name="Moule S."/>
            <person name="Murphy L.D."/>
            <person name="Oliver S."/>
            <person name="Osborne J."/>
            <person name="Quail M.A."/>
            <person name="Rajandream M.A."/>
            <person name="Rogers J."/>
            <person name="Rutter S."/>
            <person name="Seeger K."/>
            <person name="Skelton S."/>
            <person name="Squares S."/>
            <person name="Squares R."/>
            <person name="Sulston J.E."/>
            <person name="Taylor K."/>
            <person name="Whitehead S."/>
            <person name="Barrell B.G."/>
        </authorList>
    </citation>
    <scope>NUCLEOTIDE SEQUENCE [LARGE SCALE GENOMIC DNA]</scope>
    <source>
        <strain>ATCC 25618 / H37Rv</strain>
    </source>
</reference>
<reference key="2">
    <citation type="journal article" date="2008" name="BMC Syst. Biol.">
        <title>targetTB: a target identification pipeline for Mycobacterium tuberculosis through an interactome, reactome and genome-scale structural analysis.</title>
        <authorList>
            <person name="Raman K."/>
            <person name="Yeturu K."/>
            <person name="Chandra N."/>
        </authorList>
    </citation>
    <scope>IDENTIFICATION AS A DRUG TARGET [LARGE SCALE ANALYSIS]</scope>
</reference>
<reference key="3">
    <citation type="journal article" date="2011" name="Mol. Cell. Proteomics">
        <title>Proteogenomic analysis of Mycobacterium tuberculosis by high resolution mass spectrometry.</title>
        <authorList>
            <person name="Kelkar D.S."/>
            <person name="Kumar D."/>
            <person name="Kumar P."/>
            <person name="Balakrishnan L."/>
            <person name="Muthusamy B."/>
            <person name="Yadav A.K."/>
            <person name="Shrivastava P."/>
            <person name="Marimuthu A."/>
            <person name="Anand S."/>
            <person name="Sundaram H."/>
            <person name="Kingsbury R."/>
            <person name="Harsha H.C."/>
            <person name="Nair B."/>
            <person name="Prasad T.S."/>
            <person name="Chauhan D.S."/>
            <person name="Katoch K."/>
            <person name="Katoch V.M."/>
            <person name="Kumar P."/>
            <person name="Chaerkady R."/>
            <person name="Ramachandran S."/>
            <person name="Dash D."/>
            <person name="Pandey A."/>
        </authorList>
    </citation>
    <scope>IDENTIFICATION BY MASS SPECTROMETRY [LARGE SCALE ANALYSIS]</scope>
    <source>
        <strain>ATCC 25618 / H37Rv</strain>
    </source>
</reference>
<accession>P9WNA3</accession>
<accession>L0TDF9</accession>
<accession>O33290</accession>
<dbReference type="EMBL" id="AL123456">
    <property type="protein sequence ID" value="CCP45547.1"/>
    <property type="status" value="ALT_INIT"/>
    <property type="molecule type" value="Genomic_DNA"/>
</dbReference>
<dbReference type="PIR" id="C70879">
    <property type="entry name" value="C70879"/>
</dbReference>
<dbReference type="RefSeq" id="NP_217264.1">
    <property type="nucleotide sequence ID" value="NC_000962.3"/>
</dbReference>
<dbReference type="SMR" id="P9WNA3"/>
<dbReference type="FunCoup" id="P9WNA3">
    <property type="interactions" value="2"/>
</dbReference>
<dbReference type="STRING" id="83332.Rv2748c"/>
<dbReference type="PaxDb" id="83332-Rv2748c"/>
<dbReference type="GeneID" id="888408"/>
<dbReference type="KEGG" id="mtu:Rv2748c"/>
<dbReference type="TubercuList" id="Rv2748c"/>
<dbReference type="eggNOG" id="COG1674">
    <property type="taxonomic scope" value="Bacteria"/>
</dbReference>
<dbReference type="InParanoid" id="P9WNA3"/>
<dbReference type="OrthoDB" id="9807790at2"/>
<dbReference type="Proteomes" id="UP000001584">
    <property type="component" value="Chromosome"/>
</dbReference>
<dbReference type="GO" id="GO:0005829">
    <property type="term" value="C:cytosol"/>
    <property type="evidence" value="ECO:0007005"/>
    <property type="project" value="MTBBASE"/>
</dbReference>
<dbReference type="GO" id="GO:0009274">
    <property type="term" value="C:peptidoglycan-based cell wall"/>
    <property type="evidence" value="ECO:0007005"/>
    <property type="project" value="MTBBASE"/>
</dbReference>
<dbReference type="GO" id="GO:0005886">
    <property type="term" value="C:plasma membrane"/>
    <property type="evidence" value="ECO:0007669"/>
    <property type="project" value="UniProtKB-SubCell"/>
</dbReference>
<dbReference type="GO" id="GO:0005524">
    <property type="term" value="F:ATP binding"/>
    <property type="evidence" value="ECO:0007669"/>
    <property type="project" value="UniProtKB-KW"/>
</dbReference>
<dbReference type="GO" id="GO:0003677">
    <property type="term" value="F:DNA binding"/>
    <property type="evidence" value="ECO:0007669"/>
    <property type="project" value="UniProtKB-KW"/>
</dbReference>
<dbReference type="GO" id="GO:0015616">
    <property type="term" value="F:DNA translocase activity"/>
    <property type="evidence" value="ECO:0000318"/>
    <property type="project" value="GO_Central"/>
</dbReference>
<dbReference type="GO" id="GO:0051301">
    <property type="term" value="P:cell division"/>
    <property type="evidence" value="ECO:0007669"/>
    <property type="project" value="UniProtKB-KW"/>
</dbReference>
<dbReference type="GO" id="GO:0007059">
    <property type="term" value="P:chromosome segregation"/>
    <property type="evidence" value="ECO:0007669"/>
    <property type="project" value="UniProtKB-KW"/>
</dbReference>
<dbReference type="CDD" id="cd01127">
    <property type="entry name" value="TrwB_TraG_TraD_VirD4"/>
    <property type="match status" value="1"/>
</dbReference>
<dbReference type="FunFam" id="1.10.10.10:FF:000236">
    <property type="entry name" value="Cell division protein FtsK"/>
    <property type="match status" value="1"/>
</dbReference>
<dbReference type="FunFam" id="3.40.50.300:FF:000209">
    <property type="entry name" value="Cell division protein FtsK"/>
    <property type="match status" value="1"/>
</dbReference>
<dbReference type="FunFam" id="3.30.980.40:FF:000001">
    <property type="entry name" value="DNA translocase FtsK"/>
    <property type="match status" value="1"/>
</dbReference>
<dbReference type="Gene3D" id="3.30.980.40">
    <property type="match status" value="1"/>
</dbReference>
<dbReference type="Gene3D" id="3.40.50.300">
    <property type="entry name" value="P-loop containing nucleotide triphosphate hydrolases"/>
    <property type="match status" value="1"/>
</dbReference>
<dbReference type="Gene3D" id="1.10.10.10">
    <property type="entry name" value="Winged helix-like DNA-binding domain superfamily/Winged helix DNA-binding domain"/>
    <property type="match status" value="1"/>
</dbReference>
<dbReference type="InterPro" id="IPR050206">
    <property type="entry name" value="FtsK/SpoIIIE/SftA"/>
</dbReference>
<dbReference type="InterPro" id="IPR025199">
    <property type="entry name" value="FtsK_4TM"/>
</dbReference>
<dbReference type="InterPro" id="IPR041027">
    <property type="entry name" value="FtsK_alpha"/>
</dbReference>
<dbReference type="InterPro" id="IPR002543">
    <property type="entry name" value="FtsK_dom"/>
</dbReference>
<dbReference type="InterPro" id="IPR018541">
    <property type="entry name" value="Ftsk_gamma"/>
</dbReference>
<dbReference type="InterPro" id="IPR027417">
    <property type="entry name" value="P-loop_NTPase"/>
</dbReference>
<dbReference type="InterPro" id="IPR036388">
    <property type="entry name" value="WH-like_DNA-bd_sf"/>
</dbReference>
<dbReference type="InterPro" id="IPR036390">
    <property type="entry name" value="WH_DNA-bd_sf"/>
</dbReference>
<dbReference type="PANTHER" id="PTHR22683:SF41">
    <property type="entry name" value="DNA TRANSLOCASE FTSK"/>
    <property type="match status" value="1"/>
</dbReference>
<dbReference type="PANTHER" id="PTHR22683">
    <property type="entry name" value="SPORULATION PROTEIN RELATED"/>
    <property type="match status" value="1"/>
</dbReference>
<dbReference type="Pfam" id="PF13491">
    <property type="entry name" value="FtsK_4TM"/>
    <property type="match status" value="1"/>
</dbReference>
<dbReference type="Pfam" id="PF17854">
    <property type="entry name" value="FtsK_alpha"/>
    <property type="match status" value="1"/>
</dbReference>
<dbReference type="Pfam" id="PF09397">
    <property type="entry name" value="FtsK_gamma"/>
    <property type="match status" value="1"/>
</dbReference>
<dbReference type="Pfam" id="PF01580">
    <property type="entry name" value="FtsK_SpoIIIE"/>
    <property type="match status" value="1"/>
</dbReference>
<dbReference type="SMART" id="SM00843">
    <property type="entry name" value="Ftsk_gamma"/>
    <property type="match status" value="1"/>
</dbReference>
<dbReference type="SUPFAM" id="SSF52540">
    <property type="entry name" value="P-loop containing nucleoside triphosphate hydrolases"/>
    <property type="match status" value="1"/>
</dbReference>
<dbReference type="SUPFAM" id="SSF46785">
    <property type="entry name" value="Winged helix' DNA-binding domain"/>
    <property type="match status" value="1"/>
</dbReference>
<dbReference type="PROSITE" id="PS50901">
    <property type="entry name" value="FTSK"/>
    <property type="match status" value="1"/>
</dbReference>